<dbReference type="EMBL" id="JN088480">
    <property type="protein sequence ID" value="AEO12552.1"/>
    <property type="molecule type" value="mRNA"/>
</dbReference>
<dbReference type="GO" id="GO:0005576">
    <property type="term" value="C:extracellular region"/>
    <property type="evidence" value="ECO:0007669"/>
    <property type="project" value="UniProtKB-SubCell"/>
</dbReference>
<dbReference type="GO" id="GO:0090729">
    <property type="term" value="F:toxin activity"/>
    <property type="evidence" value="ECO:0007669"/>
    <property type="project" value="UniProtKB-KW"/>
</dbReference>
<name>CX9A_CRACE</name>
<protein>
    <recommendedName>
        <fullName>Crassipeptide cce9a</fullName>
    </recommendedName>
    <alternativeName>
        <fullName>Cce9.1</fullName>
    </alternativeName>
</protein>
<keyword id="KW-0903">Direct protein sequencing</keyword>
<keyword id="KW-1015">Disulfide bond</keyword>
<keyword id="KW-0528">Neurotoxin</keyword>
<keyword id="KW-0964">Secreted</keyword>
<keyword id="KW-0800">Toxin</keyword>
<reference key="1">
    <citation type="journal article" date="2011" name="Toxicon">
        <title>Characterization of a venom peptide from a crassispirid gastropod.</title>
        <authorList>
            <person name="Cabang A.B."/>
            <person name="Imperial J.S."/>
            <person name="Gajewiak J."/>
            <person name="Watkins M."/>
            <person name="Corneli P.S."/>
            <person name="Olivera B.M."/>
            <person name="Concepcion G.P."/>
        </authorList>
    </citation>
    <scope>NUCLEOTIDE SEQUENCE [MRNA]</scope>
    <scope>PROTEIN SEQUENCE OF 31-59</scope>
    <scope>SYNTHESIS OF 31-59</scope>
    <scope>FUNCTION</scope>
    <scope>BIOASSAY</scope>
    <scope>DISULFIDE BOND</scope>
    <scope>MASS SPECTROMETRY</scope>
    <source>
        <tissue>Venom</tissue>
        <tissue>Venom duct</tissue>
    </source>
</reference>
<comment type="function">
    <text evidence="1">Crassispirid snail peptide that induces sleep-like symptoms in young mice (12 and 14 days) and hyperactivity in older mice (16 days), when intracranially injected.</text>
</comment>
<comment type="subcellular location">
    <subcellularLocation>
        <location>Secreted</location>
    </subcellularLocation>
</comment>
<comment type="tissue specificity">
    <text>Expressed by the venom duct.</text>
</comment>
<comment type="domain">
    <text>The cysteine framework is IX (C-C-C-C-C-C).</text>
</comment>
<comment type="PTM">
    <text>Contains 3 disulfide bonds.</text>
</comment>
<comment type="mass spectrometry">
    <text>monoisotopic.</text>
</comment>
<comment type="miscellaneous">
    <text evidence="2">Negative results: has no activity on N-methyl-D-aspartate (NMDA) receptors.</text>
</comment>
<sequence>ADNHARVAGPRAVASGRYATEKAFLQMMTRGSCGLPCHENRRCGWACYCDDGICKPLRV</sequence>
<organism>
    <name type="scientific">Crassispira cerithina</name>
    <name type="common">Sea snail</name>
    <name type="synonym">Turridrupa cerithina</name>
    <dbReference type="NCBI Taxonomy" id="1077925"/>
    <lineage>
        <taxon>Eukaryota</taxon>
        <taxon>Metazoa</taxon>
        <taxon>Spiralia</taxon>
        <taxon>Lophotrochozoa</taxon>
        <taxon>Mollusca</taxon>
        <taxon>Gastropoda</taxon>
        <taxon>Caenogastropoda</taxon>
        <taxon>Neogastropoda</taxon>
        <taxon>Conoidea</taxon>
        <taxon>Turridae</taxon>
        <taxon>Crassispira</taxon>
    </lineage>
</organism>
<accession>G8FZS4</accession>
<feature type="propeptide" id="PRO_0000419831" evidence="1">
    <location>
        <begin position="1" status="less than"/>
        <end position="30"/>
    </location>
</feature>
<feature type="peptide" id="PRO_5000814452" description="Crassipeptide cce9a">
    <location>
        <begin position="31"/>
        <end position="59"/>
    </location>
</feature>
<feature type="non-terminal residue">
    <location>
        <position position="1"/>
    </location>
</feature>
<evidence type="ECO:0000269" key="1">
    <source>
    </source>
</evidence>
<evidence type="ECO:0000305" key="2">
    <source>
    </source>
</evidence>
<proteinExistence type="evidence at protein level"/>